<dbReference type="EMBL" id="AE017221">
    <property type="protein sequence ID" value="AAS81667.1"/>
    <property type="molecule type" value="Genomic_DNA"/>
</dbReference>
<dbReference type="RefSeq" id="WP_011173712.1">
    <property type="nucleotide sequence ID" value="NC_005835.1"/>
</dbReference>
<dbReference type="PDB" id="4V4I">
    <property type="method" value="X-ray"/>
    <property type="resolution" value="3.71 A"/>
    <property type="chains" value="B=1-276"/>
</dbReference>
<dbReference type="PDB" id="4V4J">
    <property type="method" value="X-ray"/>
    <property type="resolution" value="3.83 A"/>
    <property type="chains" value="B=1-276"/>
</dbReference>
<dbReference type="PDB" id="4V63">
    <property type="method" value="X-ray"/>
    <property type="resolution" value="3.21 A"/>
    <property type="chains" value="BD/DD=1-276"/>
</dbReference>
<dbReference type="PDB" id="4V67">
    <property type="method" value="X-ray"/>
    <property type="resolution" value="3.00 A"/>
    <property type="chains" value="BD/DD=1-276"/>
</dbReference>
<dbReference type="PDB" id="4V7P">
    <property type="method" value="X-ray"/>
    <property type="resolution" value="3.62 A"/>
    <property type="chains" value="BC/CC=2-276"/>
</dbReference>
<dbReference type="PDB" id="4V83">
    <property type="method" value="X-ray"/>
    <property type="resolution" value="3.50 A"/>
    <property type="chains" value="BC/DC=2-272"/>
</dbReference>
<dbReference type="PDB" id="4V84">
    <property type="method" value="X-ray"/>
    <property type="resolution" value="3.40 A"/>
    <property type="chains" value="BC/DC=2-272"/>
</dbReference>
<dbReference type="PDB" id="4V9J">
    <property type="method" value="X-ray"/>
    <property type="resolution" value="3.86 A"/>
    <property type="chains" value="BD/DD=2-276"/>
</dbReference>
<dbReference type="PDB" id="4V9K">
    <property type="method" value="X-ray"/>
    <property type="resolution" value="3.50 A"/>
    <property type="chains" value="BD/DD=2-276"/>
</dbReference>
<dbReference type="PDB" id="4V9L">
    <property type="method" value="X-ray"/>
    <property type="resolution" value="3.50 A"/>
    <property type="chains" value="BD/DD=2-276"/>
</dbReference>
<dbReference type="PDB" id="4V9M">
    <property type="method" value="X-ray"/>
    <property type="resolution" value="4.00 A"/>
    <property type="chains" value="BD/DD=2-276"/>
</dbReference>
<dbReference type="PDB" id="4V9N">
    <property type="method" value="X-ray"/>
    <property type="resolution" value="3.40 A"/>
    <property type="chains" value="BD/DD=2-272"/>
</dbReference>
<dbReference type="PDB" id="4V9Q">
    <property type="method" value="X-ray"/>
    <property type="resolution" value="3.40 A"/>
    <property type="chains" value="AD/CD=2-272"/>
</dbReference>
<dbReference type="PDB" id="4W29">
    <property type="method" value="X-ray"/>
    <property type="resolution" value="3.80 A"/>
    <property type="chains" value="BD/DD=2-276"/>
</dbReference>
<dbReference type="PDB" id="4XEJ">
    <property type="method" value="X-ray"/>
    <property type="resolution" value="3.80 A"/>
    <property type="chains" value="AL02/BL02=2-272"/>
</dbReference>
<dbReference type="PDB" id="5J4D">
    <property type="method" value="X-ray"/>
    <property type="resolution" value="3.10 A"/>
    <property type="chains" value="E/JB=2-276"/>
</dbReference>
<dbReference type="PDB" id="5V8I">
    <property type="method" value="X-ray"/>
    <property type="resolution" value="3.25 A"/>
    <property type="chains" value="1D/2D=1-276"/>
</dbReference>
<dbReference type="PDB" id="6B4V">
    <property type="method" value="X-ray"/>
    <property type="resolution" value="3.40 A"/>
    <property type="chains" value="E/IB=2-276"/>
</dbReference>
<dbReference type="PDB" id="6BOH">
    <property type="method" value="X-ray"/>
    <property type="resolution" value="3.40 A"/>
    <property type="chains" value="E/JB=2-276"/>
</dbReference>
<dbReference type="PDB" id="6BOK">
    <property type="method" value="X-ray"/>
    <property type="resolution" value="3.55 A"/>
    <property type="chains" value="E/HB=2-276"/>
</dbReference>
<dbReference type="PDB" id="6N1D">
    <property type="method" value="X-ray"/>
    <property type="resolution" value="3.20 A"/>
    <property type="chains" value="AL02/BL02=1-276"/>
</dbReference>
<dbReference type="PDBsum" id="4V4I"/>
<dbReference type="PDBsum" id="4V4J"/>
<dbReference type="PDBsum" id="4V63"/>
<dbReference type="PDBsum" id="4V67"/>
<dbReference type="PDBsum" id="4V7P"/>
<dbReference type="PDBsum" id="4V83"/>
<dbReference type="PDBsum" id="4V84"/>
<dbReference type="PDBsum" id="4V9J"/>
<dbReference type="PDBsum" id="4V9K"/>
<dbReference type="PDBsum" id="4V9L"/>
<dbReference type="PDBsum" id="4V9M"/>
<dbReference type="PDBsum" id="4V9N"/>
<dbReference type="PDBsum" id="4V9Q"/>
<dbReference type="PDBsum" id="4W29"/>
<dbReference type="PDBsum" id="4XEJ"/>
<dbReference type="PDBsum" id="5J4D"/>
<dbReference type="PDBsum" id="5V8I"/>
<dbReference type="PDBsum" id="6B4V"/>
<dbReference type="PDBsum" id="6BOH"/>
<dbReference type="PDBsum" id="6BOK"/>
<dbReference type="PDBsum" id="6N1D"/>
<dbReference type="SMR" id="Q72I07"/>
<dbReference type="IntAct" id="Q72I07">
    <property type="interactions" value="4"/>
</dbReference>
<dbReference type="GeneID" id="3168720"/>
<dbReference type="KEGG" id="tth:TT_C1325"/>
<dbReference type="eggNOG" id="COG0090">
    <property type="taxonomic scope" value="Bacteria"/>
</dbReference>
<dbReference type="HOGENOM" id="CLU_036235_2_1_0"/>
<dbReference type="OrthoDB" id="9778722at2"/>
<dbReference type="Proteomes" id="UP000000592">
    <property type="component" value="Chromosome"/>
</dbReference>
<dbReference type="GO" id="GO:0015934">
    <property type="term" value="C:large ribosomal subunit"/>
    <property type="evidence" value="ECO:0007669"/>
    <property type="project" value="InterPro"/>
</dbReference>
<dbReference type="GO" id="GO:0019843">
    <property type="term" value="F:rRNA binding"/>
    <property type="evidence" value="ECO:0007669"/>
    <property type="project" value="UniProtKB-UniRule"/>
</dbReference>
<dbReference type="GO" id="GO:0003735">
    <property type="term" value="F:structural constituent of ribosome"/>
    <property type="evidence" value="ECO:0007669"/>
    <property type="project" value="InterPro"/>
</dbReference>
<dbReference type="GO" id="GO:0016740">
    <property type="term" value="F:transferase activity"/>
    <property type="evidence" value="ECO:0007669"/>
    <property type="project" value="InterPro"/>
</dbReference>
<dbReference type="GO" id="GO:0002181">
    <property type="term" value="P:cytoplasmic translation"/>
    <property type="evidence" value="ECO:0007669"/>
    <property type="project" value="TreeGrafter"/>
</dbReference>
<dbReference type="FunFam" id="2.30.30.30:FF:000001">
    <property type="entry name" value="50S ribosomal protein L2"/>
    <property type="match status" value="1"/>
</dbReference>
<dbReference type="FunFam" id="2.40.50.140:FF:000003">
    <property type="entry name" value="50S ribosomal protein L2"/>
    <property type="match status" value="1"/>
</dbReference>
<dbReference type="FunFam" id="4.10.950.10:FF:000001">
    <property type="entry name" value="50S ribosomal protein L2"/>
    <property type="match status" value="1"/>
</dbReference>
<dbReference type="Gene3D" id="2.30.30.30">
    <property type="match status" value="1"/>
</dbReference>
<dbReference type="Gene3D" id="2.40.50.140">
    <property type="entry name" value="Nucleic acid-binding proteins"/>
    <property type="match status" value="1"/>
</dbReference>
<dbReference type="Gene3D" id="4.10.950.10">
    <property type="entry name" value="Ribosomal protein L2, domain 3"/>
    <property type="match status" value="1"/>
</dbReference>
<dbReference type="HAMAP" id="MF_01320_B">
    <property type="entry name" value="Ribosomal_uL2_B"/>
    <property type="match status" value="1"/>
</dbReference>
<dbReference type="InterPro" id="IPR012340">
    <property type="entry name" value="NA-bd_OB-fold"/>
</dbReference>
<dbReference type="InterPro" id="IPR014722">
    <property type="entry name" value="Rib_uL2_dom2"/>
</dbReference>
<dbReference type="InterPro" id="IPR002171">
    <property type="entry name" value="Ribosomal_uL2"/>
</dbReference>
<dbReference type="InterPro" id="IPR005880">
    <property type="entry name" value="Ribosomal_uL2_bac/org-type"/>
</dbReference>
<dbReference type="InterPro" id="IPR022669">
    <property type="entry name" value="Ribosomal_uL2_C"/>
</dbReference>
<dbReference type="InterPro" id="IPR022671">
    <property type="entry name" value="Ribosomal_uL2_CS"/>
</dbReference>
<dbReference type="InterPro" id="IPR014726">
    <property type="entry name" value="Ribosomal_uL2_dom3"/>
</dbReference>
<dbReference type="InterPro" id="IPR022666">
    <property type="entry name" value="Ribosomal_uL2_RNA-bd_dom"/>
</dbReference>
<dbReference type="InterPro" id="IPR008991">
    <property type="entry name" value="Translation_prot_SH3-like_sf"/>
</dbReference>
<dbReference type="NCBIfam" id="TIGR01171">
    <property type="entry name" value="rplB_bact"/>
    <property type="match status" value="1"/>
</dbReference>
<dbReference type="PANTHER" id="PTHR13691:SF5">
    <property type="entry name" value="LARGE RIBOSOMAL SUBUNIT PROTEIN UL2M"/>
    <property type="match status" value="1"/>
</dbReference>
<dbReference type="PANTHER" id="PTHR13691">
    <property type="entry name" value="RIBOSOMAL PROTEIN L2"/>
    <property type="match status" value="1"/>
</dbReference>
<dbReference type="Pfam" id="PF00181">
    <property type="entry name" value="Ribosomal_L2"/>
    <property type="match status" value="1"/>
</dbReference>
<dbReference type="Pfam" id="PF03947">
    <property type="entry name" value="Ribosomal_L2_C"/>
    <property type="match status" value="1"/>
</dbReference>
<dbReference type="PIRSF" id="PIRSF002158">
    <property type="entry name" value="Ribosomal_L2"/>
    <property type="match status" value="1"/>
</dbReference>
<dbReference type="SMART" id="SM01383">
    <property type="entry name" value="Ribosomal_L2"/>
    <property type="match status" value="1"/>
</dbReference>
<dbReference type="SMART" id="SM01382">
    <property type="entry name" value="Ribosomal_L2_C"/>
    <property type="match status" value="1"/>
</dbReference>
<dbReference type="SUPFAM" id="SSF50249">
    <property type="entry name" value="Nucleic acid-binding proteins"/>
    <property type="match status" value="1"/>
</dbReference>
<dbReference type="SUPFAM" id="SSF50104">
    <property type="entry name" value="Translation proteins SH3-like domain"/>
    <property type="match status" value="1"/>
</dbReference>
<dbReference type="PROSITE" id="PS00467">
    <property type="entry name" value="RIBOSOMAL_L2"/>
    <property type="match status" value="1"/>
</dbReference>
<accession>Q72I07</accession>
<protein>
    <recommendedName>
        <fullName evidence="1">Large ribosomal subunit protein uL2</fullName>
    </recommendedName>
    <alternativeName>
        <fullName evidence="3">50S ribosomal protein L2</fullName>
    </alternativeName>
</protein>
<feature type="chain" id="PRO_0000237259" description="Large ribosomal subunit protein uL2">
    <location>
        <begin position="1"/>
        <end position="276"/>
    </location>
</feature>
<feature type="region of interest" description="Disordered" evidence="2">
    <location>
        <begin position="223"/>
        <end position="276"/>
    </location>
</feature>
<feature type="compositionally biased region" description="Basic and acidic residues" evidence="2">
    <location>
        <begin position="230"/>
        <end position="240"/>
    </location>
</feature>
<feature type="compositionally biased region" description="Basic residues" evidence="2">
    <location>
        <begin position="257"/>
        <end position="276"/>
    </location>
</feature>
<feature type="strand" evidence="10">
    <location>
        <begin position="3"/>
        <end position="5"/>
    </location>
</feature>
<feature type="strand" evidence="5">
    <location>
        <begin position="9"/>
        <end position="15"/>
    </location>
</feature>
<feature type="strand" evidence="5">
    <location>
        <begin position="17"/>
        <end position="19"/>
    </location>
</feature>
<feature type="helix" evidence="4">
    <location>
        <begin position="21"/>
        <end position="23"/>
    </location>
</feature>
<feature type="strand" evidence="4">
    <location>
        <begin position="33"/>
        <end position="38"/>
    </location>
</feature>
<feature type="strand" evidence="5">
    <location>
        <begin position="45"/>
        <end position="47"/>
    </location>
</feature>
<feature type="strand" evidence="5">
    <location>
        <begin position="50"/>
        <end position="54"/>
    </location>
</feature>
<feature type="strand" evidence="4">
    <location>
        <begin position="61"/>
        <end position="63"/>
    </location>
</feature>
<feature type="turn" evidence="5">
    <location>
        <begin position="67"/>
        <end position="72"/>
    </location>
</feature>
<feature type="strand" evidence="5">
    <location>
        <begin position="77"/>
        <end position="83"/>
    </location>
</feature>
<feature type="strand" evidence="5">
    <location>
        <begin position="88"/>
        <end position="90"/>
    </location>
</feature>
<feature type="strand" evidence="5">
    <location>
        <begin position="92"/>
        <end position="100"/>
    </location>
</feature>
<feature type="strand" evidence="5">
    <location>
        <begin position="102"/>
        <end position="106"/>
    </location>
</feature>
<feature type="strand" evidence="9">
    <location>
        <begin position="108"/>
        <end position="110"/>
    </location>
</feature>
<feature type="strand" evidence="6">
    <location>
        <begin position="114"/>
        <end position="123"/>
    </location>
</feature>
<feature type="strand" evidence="7">
    <location>
        <begin position="126"/>
        <end position="128"/>
    </location>
</feature>
<feature type="strand" evidence="4">
    <location>
        <begin position="130"/>
        <end position="132"/>
    </location>
</feature>
<feature type="turn" evidence="5">
    <location>
        <begin position="133"/>
        <end position="135"/>
    </location>
</feature>
<feature type="strand" evidence="4">
    <location>
        <begin position="141"/>
        <end position="148"/>
    </location>
</feature>
<feature type="turn" evidence="4">
    <location>
        <begin position="149"/>
        <end position="151"/>
    </location>
</feature>
<feature type="strand" evidence="4">
    <location>
        <begin position="153"/>
        <end position="155"/>
    </location>
</feature>
<feature type="strand" evidence="7">
    <location>
        <begin position="158"/>
        <end position="160"/>
    </location>
</feature>
<feature type="strand" evidence="5">
    <location>
        <begin position="163"/>
        <end position="169"/>
    </location>
</feature>
<feature type="strand" evidence="5">
    <location>
        <begin position="172"/>
        <end position="176"/>
    </location>
</feature>
<feature type="turn" evidence="8">
    <location>
        <begin position="178"/>
        <end position="180"/>
    </location>
</feature>
<feature type="strand" evidence="5">
    <location>
        <begin position="182"/>
        <end position="186"/>
    </location>
</feature>
<feature type="strand" evidence="4">
    <location>
        <begin position="190"/>
        <end position="197"/>
    </location>
</feature>
<feature type="helix" evidence="5">
    <location>
        <begin position="199"/>
        <end position="203"/>
    </location>
</feature>
<feature type="helix" evidence="5">
    <location>
        <begin position="209"/>
        <end position="215"/>
    </location>
</feature>
<feature type="helix" evidence="5">
    <location>
        <begin position="223"/>
        <end position="225"/>
    </location>
</feature>
<feature type="turn" evidence="5">
    <location>
        <begin position="228"/>
        <end position="230"/>
    </location>
</feature>
<feature type="turn" evidence="10">
    <location>
        <begin position="232"/>
        <end position="235"/>
    </location>
</feature>
<feature type="strand" evidence="5">
    <location>
        <begin position="237"/>
        <end position="239"/>
    </location>
</feature>
<feature type="strand" evidence="5">
    <location>
        <begin position="243"/>
        <end position="245"/>
    </location>
</feature>
<feature type="helix" evidence="5">
    <location>
        <begin position="265"/>
        <end position="269"/>
    </location>
</feature>
<feature type="strand" evidence="7">
    <location>
        <begin position="270"/>
        <end position="272"/>
    </location>
</feature>
<gene>
    <name evidence="1" type="primary">rplB</name>
    <name type="ordered locus">TT_C1325</name>
</gene>
<proteinExistence type="evidence at protein level"/>
<comment type="function">
    <text evidence="1">One of the primary rRNA binding proteins. Required for association of the 30S and 50S subunits to form the 70S ribosome, for tRNA binding and peptide bond formation. It has been suggested to have peptidyltransferase activity; this is somewhat controversial. Makes several contacts with the 16S rRNA in the 70S ribosome.</text>
</comment>
<comment type="subunit">
    <text evidence="1">Part of the 50S ribosomal subunit. Forms a bridge to the 30S subunit in the 70S ribosome.</text>
</comment>
<comment type="similarity">
    <text evidence="1">Belongs to the universal ribosomal protein uL2 family.</text>
</comment>
<reference key="1">
    <citation type="journal article" date="2004" name="Nat. Biotechnol.">
        <title>The genome sequence of the extreme thermophile Thermus thermophilus.</title>
        <authorList>
            <person name="Henne A."/>
            <person name="Brueggemann H."/>
            <person name="Raasch C."/>
            <person name="Wiezer A."/>
            <person name="Hartsch T."/>
            <person name="Liesegang H."/>
            <person name="Johann A."/>
            <person name="Lienard T."/>
            <person name="Gohl O."/>
            <person name="Martinez-Arias R."/>
            <person name="Jacobi C."/>
            <person name="Starkuviene V."/>
            <person name="Schlenczeck S."/>
            <person name="Dencker S."/>
            <person name="Huber R."/>
            <person name="Klenk H.-P."/>
            <person name="Kramer W."/>
            <person name="Merkl R."/>
            <person name="Gottschalk G."/>
            <person name="Fritz H.-J."/>
        </authorList>
    </citation>
    <scope>NUCLEOTIDE SEQUENCE [LARGE SCALE GENOMIC DNA]</scope>
    <source>
        <strain>ATCC BAA-163 / DSM 7039 / HB27</strain>
    </source>
</reference>
<name>RL2_THET2</name>
<keyword id="KW-0002">3D-structure</keyword>
<keyword id="KW-0687">Ribonucleoprotein</keyword>
<keyword id="KW-0689">Ribosomal protein</keyword>
<keyword id="KW-0694">RNA-binding</keyword>
<keyword id="KW-0699">rRNA-binding</keyword>
<organism>
    <name type="scientific">Thermus thermophilus (strain ATCC BAA-163 / DSM 7039 / HB27)</name>
    <dbReference type="NCBI Taxonomy" id="262724"/>
    <lineage>
        <taxon>Bacteria</taxon>
        <taxon>Thermotogati</taxon>
        <taxon>Deinococcota</taxon>
        <taxon>Deinococci</taxon>
        <taxon>Thermales</taxon>
        <taxon>Thermaceae</taxon>
        <taxon>Thermus</taxon>
    </lineage>
</organism>
<evidence type="ECO:0000255" key="1">
    <source>
        <dbReference type="HAMAP-Rule" id="MF_01320"/>
    </source>
</evidence>
<evidence type="ECO:0000256" key="2">
    <source>
        <dbReference type="SAM" id="MobiDB-lite"/>
    </source>
</evidence>
<evidence type="ECO:0000305" key="3"/>
<evidence type="ECO:0007829" key="4">
    <source>
        <dbReference type="PDB" id="4V63"/>
    </source>
</evidence>
<evidence type="ECO:0007829" key="5">
    <source>
        <dbReference type="PDB" id="4V67"/>
    </source>
</evidence>
<evidence type="ECO:0007829" key="6">
    <source>
        <dbReference type="PDB" id="4V84"/>
    </source>
</evidence>
<evidence type="ECO:0007829" key="7">
    <source>
        <dbReference type="PDB" id="4V9K"/>
    </source>
</evidence>
<evidence type="ECO:0007829" key="8">
    <source>
        <dbReference type="PDB" id="4V9L"/>
    </source>
</evidence>
<evidence type="ECO:0007829" key="9">
    <source>
        <dbReference type="PDB" id="4V9N"/>
    </source>
</evidence>
<evidence type="ECO:0007829" key="10">
    <source>
        <dbReference type="PDB" id="4V9Q"/>
    </source>
</evidence>
<sequence length="276" mass="30468">MAVKKFKPYTPSRRFMTVADFSEITKTEPEKSLVKPLKKTGGRNNQGRITVRFRGGGHKRLYRIIDFKRWDKVGIPAKVAAIEYDPNRSARIALLHYVDGEKRYIIAPDGLQVGQQVVAGPDAPIQVGNALPLRFIPVGTVVHAVELEPKKGAKLARAAGTSAQIQGREGDYVILRLPSGELRKVHGECYATVGAVGNADHKNIVLGKAGRSRWLGRRPHVRGAAMNPVDHPHGGGEGRAPRGRPPASPWGWQTKGLKTRKRRKPSSRFIIARRKK</sequence>